<dbReference type="EC" id="4.2.1.136"/>
<dbReference type="EC" id="5.1.99.6"/>
<dbReference type="EMBL" id="AE000511">
    <property type="protein sequence ID" value="AAD08403.1"/>
    <property type="molecule type" value="Genomic_DNA"/>
</dbReference>
<dbReference type="PIR" id="C64690">
    <property type="entry name" value="C64690"/>
</dbReference>
<dbReference type="RefSeq" id="NP_208155.1">
    <property type="nucleotide sequence ID" value="NC_000915.1"/>
</dbReference>
<dbReference type="RefSeq" id="WP_000954017.1">
    <property type="nucleotide sequence ID" value="NC_018939.1"/>
</dbReference>
<dbReference type="PDB" id="3K5W">
    <property type="method" value="X-ray"/>
    <property type="resolution" value="2.60 A"/>
    <property type="chains" value="A=2-466"/>
</dbReference>
<dbReference type="PDBsum" id="3K5W"/>
<dbReference type="SMR" id="P56176"/>
<dbReference type="FunCoup" id="P56176">
    <property type="interactions" value="203"/>
</dbReference>
<dbReference type="STRING" id="85962.HP_1363"/>
<dbReference type="PaxDb" id="85962-C694_07035"/>
<dbReference type="EnsemblBacteria" id="AAD08403">
    <property type="protein sequence ID" value="AAD08403"/>
    <property type="gene ID" value="HP_1363"/>
</dbReference>
<dbReference type="KEGG" id="heo:C694_07035"/>
<dbReference type="KEGG" id="hpy:HP_1363"/>
<dbReference type="PATRIC" id="fig|85962.47.peg.1460"/>
<dbReference type="eggNOG" id="COG0062">
    <property type="taxonomic scope" value="Bacteria"/>
</dbReference>
<dbReference type="eggNOG" id="COG0063">
    <property type="taxonomic scope" value="Bacteria"/>
</dbReference>
<dbReference type="InParanoid" id="P56176"/>
<dbReference type="OrthoDB" id="9806925at2"/>
<dbReference type="PhylomeDB" id="P56176"/>
<dbReference type="EvolutionaryTrace" id="P56176"/>
<dbReference type="Proteomes" id="UP000000429">
    <property type="component" value="Chromosome"/>
</dbReference>
<dbReference type="GO" id="GO:0052855">
    <property type="term" value="F:ADP-dependent NAD(P)H-hydrate dehydratase activity"/>
    <property type="evidence" value="ECO:0000318"/>
    <property type="project" value="GO_Central"/>
</dbReference>
<dbReference type="GO" id="GO:0005524">
    <property type="term" value="F:ATP binding"/>
    <property type="evidence" value="ECO:0007669"/>
    <property type="project" value="UniProtKB-KW"/>
</dbReference>
<dbReference type="GO" id="GO:0046872">
    <property type="term" value="F:metal ion binding"/>
    <property type="evidence" value="ECO:0007669"/>
    <property type="project" value="UniProtKB-KW"/>
</dbReference>
<dbReference type="GO" id="GO:0052856">
    <property type="term" value="F:NAD(P)HX epimerase activity"/>
    <property type="evidence" value="ECO:0000318"/>
    <property type="project" value="GO_Central"/>
</dbReference>
<dbReference type="GO" id="GO:0110051">
    <property type="term" value="P:metabolite repair"/>
    <property type="evidence" value="ECO:0000318"/>
    <property type="project" value="GO_Central"/>
</dbReference>
<dbReference type="GO" id="GO:0046496">
    <property type="term" value="P:nicotinamide nucleotide metabolic process"/>
    <property type="evidence" value="ECO:0007669"/>
    <property type="project" value="UniProtKB-UniRule"/>
</dbReference>
<dbReference type="CDD" id="cd01171">
    <property type="entry name" value="YXKO-related"/>
    <property type="match status" value="1"/>
</dbReference>
<dbReference type="FunFam" id="3.40.1190.20:FF:000106">
    <property type="entry name" value="Bifunctional NAD(P)H-hydrate repair enzyme Nnr"/>
    <property type="match status" value="1"/>
</dbReference>
<dbReference type="FunFam" id="3.40.50.10260:FF:000021">
    <property type="entry name" value="Bifunctional NAD(P)H-hydrate repair enzyme Nnr"/>
    <property type="match status" value="1"/>
</dbReference>
<dbReference type="Gene3D" id="3.40.1190.20">
    <property type="match status" value="1"/>
</dbReference>
<dbReference type="Gene3D" id="3.40.50.10260">
    <property type="entry name" value="YjeF N-terminal domain"/>
    <property type="match status" value="1"/>
</dbReference>
<dbReference type="HAMAP" id="MF_01965">
    <property type="entry name" value="NADHX_dehydratase"/>
    <property type="match status" value="1"/>
</dbReference>
<dbReference type="HAMAP" id="MF_01966">
    <property type="entry name" value="NADHX_epimerase"/>
    <property type="match status" value="1"/>
</dbReference>
<dbReference type="InterPro" id="IPR017953">
    <property type="entry name" value="Carbohydrate_kinase_pred_CS"/>
</dbReference>
<dbReference type="InterPro" id="IPR000631">
    <property type="entry name" value="CARKD"/>
</dbReference>
<dbReference type="InterPro" id="IPR030677">
    <property type="entry name" value="Nnr"/>
</dbReference>
<dbReference type="InterPro" id="IPR029056">
    <property type="entry name" value="Ribokinase-like"/>
</dbReference>
<dbReference type="InterPro" id="IPR004443">
    <property type="entry name" value="YjeF_N_dom"/>
</dbReference>
<dbReference type="InterPro" id="IPR036652">
    <property type="entry name" value="YjeF_N_dom_sf"/>
</dbReference>
<dbReference type="NCBIfam" id="TIGR00196">
    <property type="entry name" value="yjeF_cterm"/>
    <property type="match status" value="1"/>
</dbReference>
<dbReference type="NCBIfam" id="TIGR00197">
    <property type="entry name" value="yjeF_nterm"/>
    <property type="match status" value="1"/>
</dbReference>
<dbReference type="PANTHER" id="PTHR12592:SF0">
    <property type="entry name" value="ATP-DEPENDENT (S)-NAD(P)H-HYDRATE DEHYDRATASE"/>
    <property type="match status" value="1"/>
</dbReference>
<dbReference type="PANTHER" id="PTHR12592">
    <property type="entry name" value="ATP-DEPENDENT (S)-NAD(P)H-HYDRATE DEHYDRATASE FAMILY MEMBER"/>
    <property type="match status" value="1"/>
</dbReference>
<dbReference type="Pfam" id="PF01256">
    <property type="entry name" value="Carb_kinase"/>
    <property type="match status" value="1"/>
</dbReference>
<dbReference type="Pfam" id="PF03853">
    <property type="entry name" value="YjeF_N"/>
    <property type="match status" value="1"/>
</dbReference>
<dbReference type="PIRSF" id="PIRSF017184">
    <property type="entry name" value="Nnr"/>
    <property type="match status" value="1"/>
</dbReference>
<dbReference type="SUPFAM" id="SSF53613">
    <property type="entry name" value="Ribokinase-like"/>
    <property type="match status" value="1"/>
</dbReference>
<dbReference type="SUPFAM" id="SSF64153">
    <property type="entry name" value="YjeF N-terminal domain-like"/>
    <property type="match status" value="1"/>
</dbReference>
<dbReference type="PROSITE" id="PS01050">
    <property type="entry name" value="YJEF_C_2"/>
    <property type="match status" value="1"/>
</dbReference>
<dbReference type="PROSITE" id="PS51383">
    <property type="entry name" value="YJEF_C_3"/>
    <property type="match status" value="1"/>
</dbReference>
<dbReference type="PROSITE" id="PS51385">
    <property type="entry name" value="YJEF_N"/>
    <property type="match status" value="1"/>
</dbReference>
<protein>
    <recommendedName>
        <fullName>Bifunctional NAD(P)H-hydrate repair enzyme Nnr</fullName>
    </recommendedName>
    <alternativeName>
        <fullName>Nicotinamide nucleotide repair protein</fullName>
    </alternativeName>
    <domain>
        <recommendedName>
            <fullName>ADP-dependent (S)-NAD(P)H-hydrate dehydratase</fullName>
            <ecNumber>4.2.1.136</ecNumber>
        </recommendedName>
        <alternativeName>
            <fullName>ADP-dependent NAD(P)HX dehydratase</fullName>
        </alternativeName>
    </domain>
    <domain>
        <recommendedName>
            <fullName>NAD(P)H-hydrate epimerase</fullName>
            <ecNumber>5.1.99.6</ecNumber>
        </recommendedName>
        <alternativeName>
            <fullName>NAD(P)HX epimerase</fullName>
        </alternativeName>
    </domain>
</protein>
<keyword id="KW-0002">3D-structure</keyword>
<keyword id="KW-0067">ATP-binding</keyword>
<keyword id="KW-0413">Isomerase</keyword>
<keyword id="KW-0456">Lyase</keyword>
<keyword id="KW-0479">Metal-binding</keyword>
<keyword id="KW-0511">Multifunctional enzyme</keyword>
<keyword id="KW-0520">NAD</keyword>
<keyword id="KW-0521">NADP</keyword>
<keyword id="KW-0547">Nucleotide-binding</keyword>
<keyword id="KW-0630">Potassium</keyword>
<keyword id="KW-1185">Reference proteome</keyword>
<gene>
    <name type="primary">nnr</name>
    <name type="ordered locus">HP_1363</name>
</gene>
<evidence type="ECO:0000250" key="1"/>
<evidence type="ECO:0000305" key="2"/>
<evidence type="ECO:0007829" key="3">
    <source>
        <dbReference type="PDB" id="3K5W"/>
    </source>
</evidence>
<reference key="1">
    <citation type="journal article" date="1997" name="Nature">
        <title>The complete genome sequence of the gastric pathogen Helicobacter pylori.</title>
        <authorList>
            <person name="Tomb J.-F."/>
            <person name="White O."/>
            <person name="Kerlavage A.R."/>
            <person name="Clayton R.A."/>
            <person name="Sutton G.G."/>
            <person name="Fleischmann R.D."/>
            <person name="Ketchum K.A."/>
            <person name="Klenk H.-P."/>
            <person name="Gill S.R."/>
            <person name="Dougherty B.A."/>
            <person name="Nelson K.E."/>
            <person name="Quackenbush J."/>
            <person name="Zhou L."/>
            <person name="Kirkness E.F."/>
            <person name="Peterson S.N."/>
            <person name="Loftus B.J."/>
            <person name="Richardson D.L."/>
            <person name="Dodson R.J."/>
            <person name="Khalak H.G."/>
            <person name="Glodek A."/>
            <person name="McKenney K."/>
            <person name="FitzGerald L.M."/>
            <person name="Lee N."/>
            <person name="Adams M.D."/>
            <person name="Hickey E.K."/>
            <person name="Berg D.E."/>
            <person name="Gocayne J.D."/>
            <person name="Utterback T.R."/>
            <person name="Peterson J.D."/>
            <person name="Kelley J.M."/>
            <person name="Cotton M.D."/>
            <person name="Weidman J.F."/>
            <person name="Fujii C."/>
            <person name="Bowman C."/>
            <person name="Watthey L."/>
            <person name="Wallin E."/>
            <person name="Hayes W.S."/>
            <person name="Borodovsky M."/>
            <person name="Karp P.D."/>
            <person name="Smith H.O."/>
            <person name="Fraser C.M."/>
            <person name="Venter J.C."/>
        </authorList>
    </citation>
    <scope>NUCLEOTIDE SEQUENCE [LARGE SCALE GENOMIC DNA]</scope>
    <source>
        <strain>ATCC 700392 / 26695</strain>
    </source>
</reference>
<reference key="2">
    <citation type="submission" date="2009-12" db="PDB data bank">
        <title>Crystal structure of a carbohydrate kinase (YjeF family) from Helicobacter pylori.</title>
        <authorList>
            <consortium name="New York structural genomix research consortium (NYSGXRC)"/>
        </authorList>
    </citation>
    <scope>X-RAY CRYSTALLOGRAPHY (2.6 ANGSTROMS)</scope>
</reference>
<proteinExistence type="evidence at protein level"/>
<organism>
    <name type="scientific">Helicobacter pylori (strain ATCC 700392 / 26695)</name>
    <name type="common">Campylobacter pylori</name>
    <dbReference type="NCBI Taxonomy" id="85962"/>
    <lineage>
        <taxon>Bacteria</taxon>
        <taxon>Pseudomonadati</taxon>
        <taxon>Campylobacterota</taxon>
        <taxon>Epsilonproteobacteria</taxon>
        <taxon>Campylobacterales</taxon>
        <taxon>Helicobacteraceae</taxon>
        <taxon>Helicobacter</taxon>
    </lineage>
</organism>
<accession>P56176</accession>
<sequence length="466" mass="50737">MLSVYEKVNALDKRAIEELFLSEDILMENAAMALERAVLQNASLGAKVIILCGSGDNGGDGYALARRLVGRFKTLVFEMKLAKSPMCQLQQERAKKAGVVIKAYEENALNQNLECDVLIDCVIGSHFKGKLEPFLNFESLSQKARFKIACDIPSGIDSKGRVDKGAFKADLTISMGAIKSCLLSDRAKDYVGELKVGHLGVFNQIYEIPTDTFLLEKSDLKLPLRDRKNAHKGDYGHAHVLLGKHSGAGLLSALSALSFGSGVVSVQALECEITSNNKPLELVFCENFPNLLSAFALGMGLENIPKDFNKWLELAPCVLDAGVFYHKEVLQALEKEVILTPHPKEFLSLLKLVGINISMLELLDNKLEIARDFSQKYPKVVLLLKGANTLIAHQGQVFINILGSVALAKAGSGDVLAGLILSLLSQNYTPLDAAINASSAHALASLEFKNNYALTPLDLIEKIKQL</sequence>
<feature type="chain" id="PRO_0000119044" description="Bifunctional NAD(P)H-hydrate repair enzyme Nnr">
    <location>
        <begin position="1"/>
        <end position="466"/>
    </location>
</feature>
<feature type="domain" description="YjeF N-terminal">
    <location>
        <begin position="8"/>
        <end position="207"/>
    </location>
</feature>
<feature type="domain" description="YjeF C-terminal">
    <location>
        <begin position="215"/>
        <end position="466"/>
    </location>
</feature>
<feature type="region of interest" description="NAD(P)H-hydrate epimerase" evidence="1">
    <location>
        <begin position="1"/>
        <end position="207"/>
    </location>
</feature>
<feature type="region of interest" description="NADPHX 1; for epimerase activity" evidence="1">
    <location>
        <begin position="56"/>
        <end position="60"/>
    </location>
</feature>
<feature type="region of interest" description="NADPHX 1; for epimerase activity" evidence="1">
    <location>
        <begin position="124"/>
        <end position="130"/>
    </location>
</feature>
<feature type="region of interest" description="ADP-dependent (S)-NAD(P)H-hydrate dehydratase" evidence="1">
    <location>
        <begin position="215"/>
        <end position="466"/>
    </location>
</feature>
<feature type="region of interest" description="NADPHX 2; for dehydratase activity" evidence="1">
    <location>
        <begin position="342"/>
        <end position="348"/>
    </location>
</feature>
<feature type="binding site" evidence="1">
    <location>
        <position position="57"/>
    </location>
    <ligand>
        <name>K(+)</name>
        <dbReference type="ChEBI" id="CHEBI:29103"/>
    </ligand>
</feature>
<feature type="binding site" evidence="1">
    <location>
        <position position="120"/>
    </location>
    <ligand>
        <name>K(+)</name>
        <dbReference type="ChEBI" id="CHEBI:29103"/>
    </ligand>
</feature>
<feature type="binding site" evidence="1">
    <location>
        <position position="151"/>
    </location>
    <ligand>
        <name>(6S)-NADPHX</name>
        <dbReference type="ChEBI" id="CHEBI:64076"/>
        <label>1</label>
        <note>for epimerase activity</note>
    </ligand>
</feature>
<feature type="binding site" evidence="1">
    <location>
        <position position="154"/>
    </location>
    <ligand>
        <name>K(+)</name>
        <dbReference type="ChEBI" id="CHEBI:29103"/>
    </ligand>
</feature>
<feature type="binding site" evidence="1">
    <location>
        <position position="300"/>
    </location>
    <ligand>
        <name>(6S)-NADPHX</name>
        <dbReference type="ChEBI" id="CHEBI:64076"/>
        <label>2</label>
        <note>for dehydratase activity</note>
    </ligand>
</feature>
<feature type="binding site" evidence="1">
    <location>
        <begin position="385"/>
        <end position="389"/>
    </location>
    <ligand>
        <name>ADP</name>
        <dbReference type="ChEBI" id="CHEBI:456216"/>
    </ligand>
</feature>
<feature type="binding site" evidence="1">
    <location>
        <begin position="404"/>
        <end position="413"/>
    </location>
    <ligand>
        <name>ADP</name>
        <dbReference type="ChEBI" id="CHEBI:456216"/>
    </ligand>
</feature>
<feature type="binding site" evidence="1">
    <location>
        <position position="414"/>
    </location>
    <ligand>
        <name>(6S)-NADPHX</name>
        <dbReference type="ChEBI" id="CHEBI:64076"/>
        <label>2</label>
        <note>for dehydratase activity</note>
    </ligand>
</feature>
<feature type="strand" evidence="3">
    <location>
        <begin position="2"/>
        <end position="6"/>
    </location>
</feature>
<feature type="helix" evidence="3">
    <location>
        <begin position="9"/>
        <end position="17"/>
    </location>
</feature>
<feature type="helix" evidence="3">
    <location>
        <begin position="23"/>
        <end position="39"/>
    </location>
</feature>
<feature type="strand" evidence="3">
    <location>
        <begin position="47"/>
        <end position="52"/>
    </location>
</feature>
<feature type="helix" evidence="3">
    <location>
        <begin position="56"/>
        <end position="68"/>
    </location>
</feature>
<feature type="strand" evidence="3">
    <location>
        <begin position="72"/>
        <end position="80"/>
    </location>
</feature>
<feature type="helix" evidence="3">
    <location>
        <begin position="85"/>
        <end position="96"/>
    </location>
</feature>
<feature type="strand" evidence="3">
    <location>
        <begin position="100"/>
        <end position="103"/>
    </location>
</feature>
<feature type="strand" evidence="3">
    <location>
        <begin position="115"/>
        <end position="122"/>
    </location>
</feature>
<feature type="helix" evidence="3">
    <location>
        <begin position="137"/>
        <end position="140"/>
    </location>
</feature>
<feature type="turn" evidence="3">
    <location>
        <begin position="141"/>
        <end position="143"/>
    </location>
</feature>
<feature type="strand" evidence="3">
    <location>
        <begin position="144"/>
        <end position="152"/>
    </location>
</feature>
<feature type="strand" evidence="3">
    <location>
        <begin position="170"/>
        <end position="179"/>
    </location>
</feature>
<feature type="helix" evidence="3">
    <location>
        <begin position="180"/>
        <end position="183"/>
    </location>
</feature>
<feature type="helix" evidence="3">
    <location>
        <begin position="185"/>
        <end position="187"/>
    </location>
</feature>
<feature type="helix" evidence="3">
    <location>
        <begin position="188"/>
        <end position="191"/>
    </location>
</feature>
<feature type="strand" evidence="3">
    <location>
        <begin position="193"/>
        <end position="197"/>
    </location>
</feature>
<feature type="helix" evidence="3">
    <location>
        <begin position="203"/>
        <end position="206"/>
    </location>
</feature>
<feature type="strand" evidence="3">
    <location>
        <begin position="211"/>
        <end position="214"/>
    </location>
</feature>
<feature type="helix" evidence="3">
    <location>
        <begin position="217"/>
        <end position="219"/>
    </location>
</feature>
<feature type="helix" evidence="3">
    <location>
        <begin position="232"/>
        <end position="235"/>
    </location>
</feature>
<feature type="strand" evidence="3">
    <location>
        <begin position="237"/>
        <end position="242"/>
    </location>
</feature>
<feature type="helix" evidence="3">
    <location>
        <begin position="246"/>
        <end position="258"/>
    </location>
</feature>
<feature type="strand" evidence="3">
    <location>
        <begin position="262"/>
        <end position="271"/>
    </location>
</feature>
<feature type="strand" evidence="3">
    <location>
        <begin position="274"/>
        <end position="278"/>
    </location>
</feature>
<feature type="strand" evidence="3">
    <location>
        <begin position="282"/>
        <end position="287"/>
    </location>
</feature>
<feature type="strand" evidence="3">
    <location>
        <begin position="293"/>
        <end position="297"/>
    </location>
</feature>
<feature type="helix" evidence="3">
    <location>
        <begin position="308"/>
        <end position="314"/>
    </location>
</feature>
<feature type="strand" evidence="3">
    <location>
        <begin position="317"/>
        <end position="320"/>
    </location>
</feature>
<feature type="helix" evidence="3">
    <location>
        <begin position="321"/>
        <end position="325"/>
    </location>
</feature>
<feature type="helix" evidence="3">
    <location>
        <begin position="327"/>
        <end position="330"/>
    </location>
</feature>
<feature type="turn" evidence="3">
    <location>
        <begin position="331"/>
        <end position="334"/>
    </location>
</feature>
<feature type="strand" evidence="3">
    <location>
        <begin position="335"/>
        <end position="340"/>
    </location>
</feature>
<feature type="helix" evidence="3">
    <location>
        <begin position="343"/>
        <end position="349"/>
    </location>
</feature>
<feature type="turn" evidence="3">
    <location>
        <begin position="350"/>
        <end position="353"/>
    </location>
</feature>
<feature type="helix" evidence="3">
    <location>
        <begin position="362"/>
        <end position="364"/>
    </location>
</feature>
<feature type="helix" evidence="3">
    <location>
        <begin position="371"/>
        <end position="376"/>
    </location>
</feature>
<feature type="strand" evidence="3">
    <location>
        <begin position="380"/>
        <end position="384"/>
    </location>
</feature>
<feature type="strand" evidence="3">
    <location>
        <begin position="386"/>
        <end position="393"/>
    </location>
</feature>
<feature type="strand" evidence="3">
    <location>
        <begin position="396"/>
        <end position="400"/>
    </location>
</feature>
<feature type="helix" evidence="3">
    <location>
        <begin position="405"/>
        <end position="407"/>
    </location>
</feature>
<feature type="helix" evidence="3">
    <location>
        <begin position="412"/>
        <end position="425"/>
    </location>
</feature>
<feature type="helix" evidence="3">
    <location>
        <begin position="430"/>
        <end position="443"/>
    </location>
</feature>
<feature type="helix" evidence="3">
    <location>
        <begin position="444"/>
        <end position="447"/>
    </location>
</feature>
<feature type="helix" evidence="3">
    <location>
        <begin position="456"/>
        <end position="464"/>
    </location>
</feature>
<name>NNR_HELPY</name>
<comment type="function">
    <text evidence="1">Bifunctional enzyme that catalyzes the epimerization of the S- and R-forms of NAD(P)HX and the dehydration of the S-form of NAD(P)HX at the expense of ADP, which is converted to AMP. This allows the repair of both epimers of NAD(P)HX, a damaged form of NAD(P)H that is a result of enzymatic or heat-dependent hydration (By similarity).</text>
</comment>
<comment type="catalytic activity">
    <reaction>
        <text>(6S)-NADHX + ADP = AMP + phosphate + NADH + H(+)</text>
        <dbReference type="Rhea" id="RHEA:32223"/>
        <dbReference type="ChEBI" id="CHEBI:15378"/>
        <dbReference type="ChEBI" id="CHEBI:43474"/>
        <dbReference type="ChEBI" id="CHEBI:57945"/>
        <dbReference type="ChEBI" id="CHEBI:64074"/>
        <dbReference type="ChEBI" id="CHEBI:456215"/>
        <dbReference type="ChEBI" id="CHEBI:456216"/>
        <dbReference type="EC" id="4.2.1.136"/>
    </reaction>
</comment>
<comment type="catalytic activity">
    <reaction>
        <text>(6S)-NADPHX + ADP = AMP + phosphate + NADPH + H(+)</text>
        <dbReference type="Rhea" id="RHEA:32235"/>
        <dbReference type="ChEBI" id="CHEBI:15378"/>
        <dbReference type="ChEBI" id="CHEBI:43474"/>
        <dbReference type="ChEBI" id="CHEBI:57783"/>
        <dbReference type="ChEBI" id="CHEBI:64076"/>
        <dbReference type="ChEBI" id="CHEBI:456215"/>
        <dbReference type="ChEBI" id="CHEBI:456216"/>
        <dbReference type="EC" id="4.2.1.136"/>
    </reaction>
</comment>
<comment type="catalytic activity">
    <reaction>
        <text>(6R)-NADHX = (6S)-NADHX</text>
        <dbReference type="Rhea" id="RHEA:32215"/>
        <dbReference type="ChEBI" id="CHEBI:64074"/>
        <dbReference type="ChEBI" id="CHEBI:64075"/>
        <dbReference type="EC" id="5.1.99.6"/>
    </reaction>
</comment>
<comment type="catalytic activity">
    <reaction>
        <text>(6R)-NADPHX = (6S)-NADPHX</text>
        <dbReference type="Rhea" id="RHEA:32227"/>
        <dbReference type="ChEBI" id="CHEBI:64076"/>
        <dbReference type="ChEBI" id="CHEBI:64077"/>
        <dbReference type="EC" id="5.1.99.6"/>
    </reaction>
</comment>
<comment type="cofactor">
    <cofactor evidence="1">
        <name>K(+)</name>
        <dbReference type="ChEBI" id="CHEBI:29103"/>
    </cofactor>
    <text evidence="1">Binds 1 potassium ion per subunit.</text>
</comment>
<comment type="similarity">
    <text evidence="2">In the N-terminal section; belongs to the NnrE/AIBP family.</text>
</comment>
<comment type="similarity">
    <text evidence="2">In the C-terminal section; belongs to the NnrD/CARKD family.</text>
</comment>